<gene>
    <name type="ordered locus">NGR_a01600</name>
    <name type="ORF">y4sM</name>
</gene>
<feature type="chain" id="PRO_0000111779" description="Uncharacterized HTH-type transcriptional regulator y4sM">
    <location>
        <begin position="1"/>
        <end position="127"/>
    </location>
</feature>
<feature type="domain" description="HTH asnC-type" evidence="1">
    <location>
        <begin position="1"/>
        <end position="46"/>
    </location>
</feature>
<feature type="sequence conflict" description="In Ref. 1; CAA52362." evidence="2" ref="1">
    <original>L</original>
    <variation>R</variation>
    <location>
        <position position="107"/>
    </location>
</feature>
<dbReference type="EMBL" id="X74314">
    <property type="protein sequence ID" value="CAA52362.1"/>
    <property type="molecule type" value="Genomic_DNA"/>
</dbReference>
<dbReference type="EMBL" id="U00090">
    <property type="protein sequence ID" value="AAB91852.1"/>
    <property type="molecule type" value="Genomic_DNA"/>
</dbReference>
<dbReference type="PIR" id="S43966">
    <property type="entry name" value="S43966"/>
</dbReference>
<dbReference type="RefSeq" id="NP_444065.1">
    <property type="nucleotide sequence ID" value="NC_000914.2"/>
</dbReference>
<dbReference type="RefSeq" id="WP_010875196.1">
    <property type="nucleotide sequence ID" value="NC_000914.2"/>
</dbReference>
<dbReference type="SMR" id="P50337"/>
<dbReference type="KEGG" id="rhi:NGR_a01600"/>
<dbReference type="PATRIC" id="fig|394.7.peg.149"/>
<dbReference type="eggNOG" id="COG1522">
    <property type="taxonomic scope" value="Bacteria"/>
</dbReference>
<dbReference type="HOGENOM" id="CLU_091233_0_3_5"/>
<dbReference type="OrthoDB" id="8085200at2"/>
<dbReference type="Proteomes" id="UP000001054">
    <property type="component" value="Plasmid pNGR234a"/>
</dbReference>
<dbReference type="GO" id="GO:0005829">
    <property type="term" value="C:cytosol"/>
    <property type="evidence" value="ECO:0007669"/>
    <property type="project" value="TreeGrafter"/>
</dbReference>
<dbReference type="GO" id="GO:0043565">
    <property type="term" value="F:sequence-specific DNA binding"/>
    <property type="evidence" value="ECO:0007669"/>
    <property type="project" value="InterPro"/>
</dbReference>
<dbReference type="GO" id="GO:0043200">
    <property type="term" value="P:response to amino acid"/>
    <property type="evidence" value="ECO:0007669"/>
    <property type="project" value="TreeGrafter"/>
</dbReference>
<dbReference type="Gene3D" id="3.30.70.920">
    <property type="match status" value="1"/>
</dbReference>
<dbReference type="Gene3D" id="1.10.10.10">
    <property type="entry name" value="Winged helix-like DNA-binding domain superfamily/Winged helix DNA-binding domain"/>
    <property type="match status" value="1"/>
</dbReference>
<dbReference type="InterPro" id="IPR000485">
    <property type="entry name" value="AsnC-type_HTH_dom"/>
</dbReference>
<dbReference type="InterPro" id="IPR011008">
    <property type="entry name" value="Dimeric_a/b-barrel"/>
</dbReference>
<dbReference type="InterPro" id="IPR019888">
    <property type="entry name" value="Tscrpt_reg_AsnC-like"/>
</dbReference>
<dbReference type="InterPro" id="IPR019887">
    <property type="entry name" value="Tscrpt_reg_AsnC/Lrp_C"/>
</dbReference>
<dbReference type="InterPro" id="IPR036388">
    <property type="entry name" value="WH-like_DNA-bd_sf"/>
</dbReference>
<dbReference type="InterPro" id="IPR036390">
    <property type="entry name" value="WH_DNA-bd_sf"/>
</dbReference>
<dbReference type="PANTHER" id="PTHR30154">
    <property type="entry name" value="LEUCINE-RESPONSIVE REGULATORY PROTEIN"/>
    <property type="match status" value="1"/>
</dbReference>
<dbReference type="PANTHER" id="PTHR30154:SF34">
    <property type="entry name" value="TRANSCRIPTIONAL REGULATOR AZLB"/>
    <property type="match status" value="1"/>
</dbReference>
<dbReference type="Pfam" id="PF01037">
    <property type="entry name" value="AsnC_trans_reg"/>
    <property type="match status" value="1"/>
</dbReference>
<dbReference type="Pfam" id="PF13412">
    <property type="entry name" value="HTH_24"/>
    <property type="match status" value="1"/>
</dbReference>
<dbReference type="SMART" id="SM00344">
    <property type="entry name" value="HTH_ASNC"/>
    <property type="match status" value="1"/>
</dbReference>
<dbReference type="SUPFAM" id="SSF54909">
    <property type="entry name" value="Dimeric alpha+beta barrel"/>
    <property type="match status" value="1"/>
</dbReference>
<dbReference type="SUPFAM" id="SSF46785">
    <property type="entry name" value="Winged helix' DNA-binding domain"/>
    <property type="match status" value="1"/>
</dbReference>
<dbReference type="PROSITE" id="PS50956">
    <property type="entry name" value="HTH_ASNC_2"/>
    <property type="match status" value="1"/>
</dbReference>
<name>Y4SM_SINFN</name>
<comment type="function">
    <text>Not known, symbiotically active.</text>
</comment>
<reference key="1">
    <citation type="journal article" date="1994" name="Nucleic Acids Res.">
        <title>Subtraction hybridisation and shot-gun sequencing: a new approach to identify symbiotic loci.</title>
        <authorList>
            <person name="Perret X."/>
            <person name="Fellay R."/>
            <person name="Bjourson A.J."/>
            <person name="Cooper J.E."/>
            <person name="Brenner S."/>
            <person name="Broughton W.J."/>
        </authorList>
    </citation>
    <scope>NUCLEOTIDE SEQUENCE [GENOMIC DNA]</scope>
</reference>
<reference key="2">
    <citation type="journal article" date="1997" name="Nature">
        <title>Molecular basis of symbiosis between Rhizobium and legumes.</title>
        <authorList>
            <person name="Freiberg C.A."/>
            <person name="Fellay R."/>
            <person name="Bairoch A."/>
            <person name="Broughton W.J."/>
            <person name="Rosenthal A."/>
            <person name="Perret X."/>
        </authorList>
    </citation>
    <scope>NUCLEOTIDE SEQUENCE [LARGE SCALE GENOMIC DNA]</scope>
    <source>
        <strain>NBRC 101917 / NGR234</strain>
    </source>
</reference>
<reference key="3">
    <citation type="journal article" date="2009" name="Appl. Environ. Microbiol.">
        <title>Rhizobium sp. strain NGR234 possesses a remarkable number of secretion systems.</title>
        <authorList>
            <person name="Schmeisser C."/>
            <person name="Liesegang H."/>
            <person name="Krysciak D."/>
            <person name="Bakkou N."/>
            <person name="Le Quere A."/>
            <person name="Wollherr A."/>
            <person name="Heinemeyer I."/>
            <person name="Morgenstern B."/>
            <person name="Pommerening-Roeser A."/>
            <person name="Flores M."/>
            <person name="Palacios R."/>
            <person name="Brenner S."/>
            <person name="Gottschalk G."/>
            <person name="Schmitz R.A."/>
            <person name="Broughton W.J."/>
            <person name="Perret X."/>
            <person name="Strittmatter A.W."/>
            <person name="Streit W.R."/>
        </authorList>
    </citation>
    <scope>NUCLEOTIDE SEQUENCE [LARGE SCALE GENOMIC DNA]</scope>
    <source>
        <strain>NBRC 101917 / NGR234</strain>
    </source>
</reference>
<geneLocation type="plasmid">
    <name>sym pNGR234a</name>
</geneLocation>
<sequence>MEVGLSPSACLRRIKLMEQAGVIRGYTALVDPTQSESTIAVIINITLERQTEEYLDKFEAAVRKHPEIRECYLMTGGSDYMLRVDVENAGAFERIHKEVLSTLPGVLRIHSSFSIRNVLAGRLKAKR</sequence>
<organism>
    <name type="scientific">Sinorhizobium fredii (strain NBRC 101917 / NGR234)</name>
    <dbReference type="NCBI Taxonomy" id="394"/>
    <lineage>
        <taxon>Bacteria</taxon>
        <taxon>Pseudomonadati</taxon>
        <taxon>Pseudomonadota</taxon>
        <taxon>Alphaproteobacteria</taxon>
        <taxon>Hyphomicrobiales</taxon>
        <taxon>Rhizobiaceae</taxon>
        <taxon>Sinorhizobium/Ensifer group</taxon>
        <taxon>Sinorhizobium</taxon>
    </lineage>
</organism>
<protein>
    <recommendedName>
        <fullName>Uncharacterized HTH-type transcriptional regulator y4sM</fullName>
    </recommendedName>
    <alternativeName>
        <fullName>ORF-1</fullName>
    </alternativeName>
</protein>
<proteinExistence type="predicted"/>
<accession>P50337</accession>
<evidence type="ECO:0000255" key="1">
    <source>
        <dbReference type="PROSITE-ProRule" id="PRU00319"/>
    </source>
</evidence>
<evidence type="ECO:0000305" key="2"/>
<keyword id="KW-0238">DNA-binding</keyword>
<keyword id="KW-0614">Plasmid</keyword>
<keyword id="KW-1185">Reference proteome</keyword>
<keyword id="KW-0804">Transcription</keyword>
<keyword id="KW-0805">Transcription regulation</keyword>